<comment type="function">
    <text evidence="5">Key structural component of the deuterosome, a structure that promotes de novo centriole amplification in multiciliated cells. Deuterosome-mediated centriole amplification occurs in terminally differentiated multiciliated cells and can generate more than 100 centrioles. Probably sufficient for the specification and formation of the deuterosome inner core. Interacts with CEP152 and recruits PLK4 to activate centriole biogenesis.</text>
</comment>
<comment type="subunit">
    <text evidence="5">Interacts with CEP152; the interaction is mutually exclusive with CEP63.</text>
</comment>
<comment type="interaction">
    <interactant intactId="EBI-16081624">
        <id>Q7M6Y5</id>
    </interactant>
    <interactant intactId="EBI-2554268">
        <id>A2AUM9</id>
        <label>Cep152</label>
    </interactant>
    <organismsDiffer>false</organismsDiffer>
    <experiments>2</experiments>
</comment>
<comment type="subcellular location">
    <subcellularLocation>
        <location evidence="5">Cytoplasm</location>
    </subcellularLocation>
    <text>Localizes to the deuterosome.</text>
</comment>
<comment type="alternative products">
    <event type="alternative splicing"/>
    <isoform>
        <id>Q7M6Y5-1</id>
        <name>1</name>
        <sequence type="displayed"/>
    </isoform>
    <isoform>
        <id>Q7M6Y5-2</id>
        <name>2</name>
        <sequence type="described" ref="VSP_041617"/>
    </isoform>
</comment>
<comment type="tissue specificity">
    <text evidence="5">Highly enriched in multicilia-abundant tissues (trachea and oviduct).</text>
</comment>
<comment type="miscellaneous">
    <text evidence="8">CEP63 and DEUP1 paralogs are both involved in centriole amplification: while CEP63 mediates mother-centriole-dependent centriole duplication, DEUP1 mediates de novo centriole amplification in multiciliated cells.</text>
</comment>
<comment type="similarity">
    <text evidence="7">Belongs to the CEP63 family.</text>
</comment>
<comment type="caution">
    <text evidence="7">It is uncertain whether Met-1 or Met-22 is the initiator.</text>
</comment>
<comment type="sequence caution" evidence="7">
    <conflict type="erroneous initiation">
        <sequence resource="EMBL-CDS" id="AAH96547"/>
    </conflict>
    <text>Truncated N-terminus.</text>
</comment>
<comment type="sequence caution" evidence="7">
    <conflict type="erroneous initiation">
        <sequence resource="EMBL-CDS" id="DAA01466"/>
    </conflict>
    <text>Truncated N-terminus.</text>
</comment>
<reference key="1">
    <citation type="journal article" date="2009" name="PLoS Biol.">
        <title>Lineage-specific biology revealed by a finished genome assembly of the mouse.</title>
        <authorList>
            <person name="Church D.M."/>
            <person name="Goodstadt L."/>
            <person name="Hillier L.W."/>
            <person name="Zody M.C."/>
            <person name="Goldstein S."/>
            <person name="She X."/>
            <person name="Bult C.J."/>
            <person name="Agarwala R."/>
            <person name="Cherry J.L."/>
            <person name="DiCuccio M."/>
            <person name="Hlavina W."/>
            <person name="Kapustin Y."/>
            <person name="Meric P."/>
            <person name="Maglott D."/>
            <person name="Birtle Z."/>
            <person name="Marques A.C."/>
            <person name="Graves T."/>
            <person name="Zhou S."/>
            <person name="Teague B."/>
            <person name="Potamousis K."/>
            <person name="Churas C."/>
            <person name="Place M."/>
            <person name="Herschleb J."/>
            <person name="Runnheim R."/>
            <person name="Forrest D."/>
            <person name="Amos-Landgraf J."/>
            <person name="Schwartz D.C."/>
            <person name="Cheng Z."/>
            <person name="Lindblad-Toh K."/>
            <person name="Eichler E.E."/>
            <person name="Ponting C.P."/>
        </authorList>
    </citation>
    <scope>NUCLEOTIDE SEQUENCE [LARGE SCALE GENOMIC DNA]</scope>
    <source>
        <strain>C57BL/6J</strain>
    </source>
</reference>
<reference key="2">
    <citation type="journal article" date="2004" name="Genome Res.">
        <title>The status, quality, and expansion of the NIH full-length cDNA project: the Mammalian Gene Collection (MGC).</title>
        <authorList>
            <consortium name="The MGC Project Team"/>
        </authorList>
    </citation>
    <scope>NUCLEOTIDE SEQUENCE [LARGE SCALE MRNA] (ISOFORM 2)</scope>
    <source>
        <strain>C57BL/6J</strain>
        <tissue>Brain</tissue>
    </source>
</reference>
<reference key="3">
    <citation type="submission" date="2009-01" db="UniProtKB">
        <authorList>
            <person name="Lubec G."/>
            <person name="Sunyer B."/>
            <person name="Chen W.-Q."/>
        </authorList>
    </citation>
    <scope>PROTEIN SEQUENCE OF 388-394</scope>
    <scope>IDENTIFICATION BY MASS SPECTROMETRY</scope>
    <source>
        <strain>OF1</strain>
        <tissue>Hippocampus</tissue>
    </source>
</reference>
<reference key="4">
    <citation type="journal article" date="2003" name="BMC Genomics">
        <title>Gene discovery in the hamster: a comparative genomics approach for gene annotation by sequencing of hamster testis cDNAs.</title>
        <authorList>
            <person name="Oduru S."/>
            <person name="Campbell J.L."/>
            <person name="Karri S."/>
            <person name="Hendry W.J."/>
            <person name="Khan S.A."/>
            <person name="Williams S.C."/>
        </authorList>
    </citation>
    <scope>IDENTIFICATION OF 11-601</scope>
    <source>
        <strain>C57BL/6J</strain>
    </source>
</reference>
<reference key="5">
    <citation type="journal article" date="2013" name="Nat. Cell Biol.">
        <title>The Cep63 paralogue Deup1 enables massive de novo centriole biogenesis for vertebrate multiciliogenesis.</title>
        <authorList>
            <person name="Zhao H."/>
            <person name="Zhu L."/>
            <person name="Zhu Y."/>
            <person name="Cao J."/>
            <person name="Li S."/>
            <person name="Huang Q."/>
            <person name="Xu T."/>
            <person name="Huang X."/>
            <person name="Yan X."/>
            <person name="Zhu X."/>
        </authorList>
    </citation>
    <scope>FUNCTION</scope>
    <scope>SUBCELLULAR LOCATION</scope>
    <scope>INTERACTION WITH CEP152</scope>
    <scope>TISSUE SPECIFICITY</scope>
</reference>
<sequence length="601" mass="69678">MENQAHTTAGASPCEAELQELMEQIDIMVSNKKLDWERKMRALETRLDLRDQELANAQTCLDQKGQEVGLLRQKLDSLEKCNLVMTQNYEGQLQTLKAQFSKLTSNFEKLRLHQMKQNQIHRKESSSKEELPFELSSLNQKLEEFRAKSREWDKQEVLYQTHLVSLDAQQKLLSEKCSQFQKQAQNYQTQLNGKKQCAEDSSSEIPRLVCESDPGCEATQRDEFIIEKLKSAVSEIALSRNKLQDENQKLLQELKMYQRQCQAMEAGLSEVKSELQSRDDLLRIIEMERLHLHRELLRMGEVQTAQDNRKRVESSYSPSPKEAERKRKELFPMVSDQPNHEKELSKMRSQLYQEEGLCSEQERLRSEISELTQELHQKEVTIATVMKKAALLERQLKIELEIKERMLAKQQVSDRRYKAVRTENTHLKGMMGDLDPARYLAVDLSNKKHSQCTSINKLEYENERLRSDLAKLHGNGKAAWPNQSSYGEAGAYVFQSQLKTETSGDRISQDCELNRSPTPLSPLPFQTKEMASPLVGDNEVLALSPPDISFRASLAAQHFLMEEERRAKELEKLLNTHIDELQRHTEFTLNKYTKLKQSRHI</sequence>
<feature type="chain" id="PRO_0000297831" description="Deuterosome assembly protein 1">
    <location>
        <begin position="1"/>
        <end position="601"/>
    </location>
</feature>
<feature type="region of interest" description="Disordered" evidence="4">
    <location>
        <begin position="305"/>
        <end position="329"/>
    </location>
</feature>
<feature type="coiled-coil region" evidence="3">
    <location>
        <begin position="14"/>
        <end position="59"/>
    </location>
</feature>
<feature type="coiled-coil region" evidence="3">
    <location>
        <begin position="86"/>
        <end position="196"/>
    </location>
</feature>
<feature type="coiled-coil region" evidence="3">
    <location>
        <begin position="226"/>
        <end position="277"/>
    </location>
</feature>
<feature type="coiled-coil region" evidence="3">
    <location>
        <begin position="354"/>
        <end position="397"/>
    </location>
</feature>
<feature type="coiled-coil region" evidence="3">
    <location>
        <begin position="555"/>
        <end position="586"/>
    </location>
</feature>
<feature type="modified residue" description="Phosphoserine" evidence="2">
    <location>
        <position position="544"/>
    </location>
</feature>
<feature type="splice variant" id="VSP_041617" description="In isoform 2." evidence="6">
    <location>
        <begin position="347"/>
        <end position="440"/>
    </location>
</feature>
<dbReference type="EMBL" id="AC155249">
    <property type="status" value="NOT_ANNOTATED_CDS"/>
    <property type="molecule type" value="Genomic_DNA"/>
</dbReference>
<dbReference type="EMBL" id="BC096547">
    <property type="protein sequence ID" value="AAH96547.1"/>
    <property type="status" value="ALT_INIT"/>
    <property type="molecule type" value="mRNA"/>
</dbReference>
<dbReference type="EMBL" id="BK001332">
    <property type="protein sequence ID" value="DAA01466.1"/>
    <property type="status" value="ALT_INIT"/>
    <property type="molecule type" value="mRNA"/>
</dbReference>
<dbReference type="CCDS" id="CCDS22839.2">
    <molecule id="Q7M6Y5-2"/>
</dbReference>
<dbReference type="CCDS" id="CCDS90502.1">
    <molecule id="Q7M6Y5-1"/>
</dbReference>
<dbReference type="RefSeq" id="NP_001360846.1">
    <molecule id="Q7M6Y5-1"/>
    <property type="nucleotide sequence ID" value="NM_001373917.1"/>
</dbReference>
<dbReference type="RefSeq" id="NP_861537.2">
    <molecule id="Q7M6Y5-2"/>
    <property type="nucleotide sequence ID" value="NM_181816.3"/>
</dbReference>
<dbReference type="RefSeq" id="XP_006510222.1">
    <molecule id="Q7M6Y5-1"/>
    <property type="nucleotide sequence ID" value="XM_006510159.4"/>
</dbReference>
<dbReference type="RefSeq" id="XP_006510223.1">
    <property type="nucleotide sequence ID" value="XM_006510160.1"/>
</dbReference>
<dbReference type="RefSeq" id="XP_036010753.1">
    <molecule id="Q7M6Y5-2"/>
    <property type="nucleotide sequence ID" value="XM_036154860.1"/>
</dbReference>
<dbReference type="SMR" id="Q7M6Y5"/>
<dbReference type="DIP" id="DIP-61755N"/>
<dbReference type="FunCoup" id="Q7M6Y5">
    <property type="interactions" value="80"/>
</dbReference>
<dbReference type="IntAct" id="Q7M6Y5">
    <property type="interactions" value="2"/>
</dbReference>
<dbReference type="STRING" id="10090.ENSMUSP00000111256"/>
<dbReference type="iPTMnet" id="Q7M6Y5"/>
<dbReference type="PhosphoSitePlus" id="Q7M6Y5"/>
<dbReference type="PaxDb" id="10090-ENSMUSP00000039912"/>
<dbReference type="ProteomicsDB" id="279404">
    <molecule id="Q7M6Y5-1"/>
</dbReference>
<dbReference type="ProteomicsDB" id="279405">
    <molecule id="Q7M6Y5-2"/>
</dbReference>
<dbReference type="Antibodypedia" id="2572">
    <property type="antibodies" value="87 antibodies from 19 providers"/>
</dbReference>
<dbReference type="DNASU" id="234964"/>
<dbReference type="Ensembl" id="ENSMUST00000045513.13">
    <molecule id="Q7M6Y5-1"/>
    <property type="protein sequence ID" value="ENSMUSP00000039912.7"/>
    <property type="gene ID" value="ENSMUSG00000039977.17"/>
</dbReference>
<dbReference type="Ensembl" id="ENSMUST00000115592.8">
    <molecule id="Q7M6Y5-2"/>
    <property type="protein sequence ID" value="ENSMUSP00000111255.2"/>
    <property type="gene ID" value="ENSMUSG00000039977.17"/>
</dbReference>
<dbReference type="Ensembl" id="ENSMUST00000115593.10">
    <molecule id="Q7M6Y5-2"/>
    <property type="protein sequence ID" value="ENSMUSP00000111256.4"/>
    <property type="gene ID" value="ENSMUSG00000039977.17"/>
</dbReference>
<dbReference type="GeneID" id="234964"/>
<dbReference type="KEGG" id="mmu:234964"/>
<dbReference type="UCSC" id="uc009ogd.1">
    <molecule id="Q7M6Y5-2"/>
    <property type="organism name" value="mouse"/>
</dbReference>
<dbReference type="UCSC" id="uc009oge.1">
    <molecule id="Q7M6Y5-1"/>
    <property type="organism name" value="mouse"/>
</dbReference>
<dbReference type="AGR" id="MGI:2443026"/>
<dbReference type="CTD" id="159989"/>
<dbReference type="MGI" id="MGI:2443026">
    <property type="gene designation" value="Deup1"/>
</dbReference>
<dbReference type="VEuPathDB" id="HostDB:ENSMUSG00000039977"/>
<dbReference type="eggNOG" id="ENOG502QRBJ">
    <property type="taxonomic scope" value="Eukaryota"/>
</dbReference>
<dbReference type="GeneTree" id="ENSGT00940000153190"/>
<dbReference type="HOGENOM" id="CLU_027471_1_0_1"/>
<dbReference type="InParanoid" id="Q7M6Y5"/>
<dbReference type="OMA" id="SHNTWEF"/>
<dbReference type="OrthoDB" id="10007333at2759"/>
<dbReference type="PhylomeDB" id="Q7M6Y5"/>
<dbReference type="TreeFam" id="TF330595"/>
<dbReference type="BioGRID-ORCS" id="234964">
    <property type="hits" value="1 hit in 61 CRISPR screens"/>
</dbReference>
<dbReference type="CD-CODE" id="017348A2">
    <property type="entry name" value="Synthetic Condensate 000276"/>
</dbReference>
<dbReference type="ChiTaRS" id="Deup1">
    <property type="organism name" value="mouse"/>
</dbReference>
<dbReference type="PRO" id="PR:Q7M6Y5"/>
<dbReference type="Proteomes" id="UP000000589">
    <property type="component" value="Chromosome 9"/>
</dbReference>
<dbReference type="RNAct" id="Q7M6Y5">
    <property type="molecule type" value="protein"/>
</dbReference>
<dbReference type="Bgee" id="ENSMUSG00000039977">
    <property type="expression patterns" value="Expressed in spermatid and 50 other cell types or tissues"/>
</dbReference>
<dbReference type="ExpressionAtlas" id="Q7M6Y5">
    <property type="expression patterns" value="baseline and differential"/>
</dbReference>
<dbReference type="GO" id="GO:0005737">
    <property type="term" value="C:cytoplasm"/>
    <property type="evidence" value="ECO:0007669"/>
    <property type="project" value="UniProtKB-SubCell"/>
</dbReference>
<dbReference type="GO" id="GO:0098536">
    <property type="term" value="C:deuterosome"/>
    <property type="evidence" value="ECO:0000314"/>
    <property type="project" value="UniProtKB"/>
</dbReference>
<dbReference type="GO" id="GO:0042802">
    <property type="term" value="F:identical protein binding"/>
    <property type="evidence" value="ECO:0007669"/>
    <property type="project" value="Ensembl"/>
</dbReference>
<dbReference type="GO" id="GO:0030030">
    <property type="term" value="P:cell projection organization"/>
    <property type="evidence" value="ECO:0007669"/>
    <property type="project" value="UniProtKB-KW"/>
</dbReference>
<dbReference type="GO" id="GO:0098535">
    <property type="term" value="P:de novo centriole assembly involved in multi-ciliated epithelial cell differentiation"/>
    <property type="evidence" value="ECO:0000314"/>
    <property type="project" value="UniProtKB"/>
</dbReference>
<dbReference type="GO" id="GO:1903251">
    <property type="term" value="P:multi-ciliated epithelial cell differentiation"/>
    <property type="evidence" value="ECO:0000314"/>
    <property type="project" value="UniProtKB"/>
</dbReference>
<dbReference type="InterPro" id="IPR031470">
    <property type="entry name" value="Cep63/Deup1_N"/>
</dbReference>
<dbReference type="PANTHER" id="PTHR18875:SF5">
    <property type="entry name" value="DEUTEROSOME ASSEMBLY PROTEIN 1"/>
    <property type="match status" value="1"/>
</dbReference>
<dbReference type="PANTHER" id="PTHR18875">
    <property type="entry name" value="SARCOMA ANTIGEN NY-SAR-24/CYTOSKELETAL PROTEIN SOJO"/>
    <property type="match status" value="1"/>
</dbReference>
<dbReference type="Pfam" id="PF17045">
    <property type="entry name" value="CEP63"/>
    <property type="match status" value="1"/>
</dbReference>
<name>DEUP1_MOUSE</name>
<accession>Q7M6Y5</accession>
<accession>E9QL16</accession>
<accession>Q4VA46</accession>
<protein>
    <recommendedName>
        <fullName evidence="1">Deuterosome assembly protein 1</fullName>
    </recommendedName>
    <alternativeName>
        <fullName>Coiled-coil domain-containing protein 67</fullName>
    </alternativeName>
</protein>
<proteinExistence type="evidence at protein level"/>
<organism>
    <name type="scientific">Mus musculus</name>
    <name type="common">Mouse</name>
    <dbReference type="NCBI Taxonomy" id="10090"/>
    <lineage>
        <taxon>Eukaryota</taxon>
        <taxon>Metazoa</taxon>
        <taxon>Chordata</taxon>
        <taxon>Craniata</taxon>
        <taxon>Vertebrata</taxon>
        <taxon>Euteleostomi</taxon>
        <taxon>Mammalia</taxon>
        <taxon>Eutheria</taxon>
        <taxon>Euarchontoglires</taxon>
        <taxon>Glires</taxon>
        <taxon>Rodentia</taxon>
        <taxon>Myomorpha</taxon>
        <taxon>Muroidea</taxon>
        <taxon>Muridae</taxon>
        <taxon>Murinae</taxon>
        <taxon>Mus</taxon>
        <taxon>Mus</taxon>
    </lineage>
</organism>
<evidence type="ECO:0000250" key="1">
    <source>
        <dbReference type="UniProtKB" id="Q05D60"/>
    </source>
</evidence>
<evidence type="ECO:0000250" key="2">
    <source>
        <dbReference type="UniProtKB" id="Q5U3Z6"/>
    </source>
</evidence>
<evidence type="ECO:0000255" key="3"/>
<evidence type="ECO:0000256" key="4">
    <source>
        <dbReference type="SAM" id="MobiDB-lite"/>
    </source>
</evidence>
<evidence type="ECO:0000269" key="5">
    <source>
    </source>
</evidence>
<evidence type="ECO:0000303" key="6">
    <source>
    </source>
</evidence>
<evidence type="ECO:0000305" key="7"/>
<evidence type="ECO:0000305" key="8">
    <source>
    </source>
</evidence>
<gene>
    <name evidence="1" type="primary">Deup1</name>
    <name type="synonym">Ccdc67</name>
</gene>
<keyword id="KW-0025">Alternative splicing</keyword>
<keyword id="KW-0970">Cilium biogenesis/degradation</keyword>
<keyword id="KW-0175">Coiled coil</keyword>
<keyword id="KW-0963">Cytoplasm</keyword>
<keyword id="KW-0903">Direct protein sequencing</keyword>
<keyword id="KW-0597">Phosphoprotein</keyword>
<keyword id="KW-1185">Reference proteome</keyword>